<protein>
    <recommendedName>
        <fullName evidence="1">Cyanuric acid amidohydrolase</fullName>
        <shortName evidence="1">CAH</shortName>
        <ecNumber evidence="1">3.5.2.15</ecNumber>
    </recommendedName>
</protein>
<accession>H8ZKW0</accession>
<evidence type="ECO:0000255" key="1">
    <source>
        <dbReference type="HAMAP-Rule" id="MF_01989"/>
    </source>
</evidence>
<evidence type="ECO:0000269" key="2">
    <source>
    </source>
</evidence>
<evidence type="ECO:0000305" key="3"/>
<comment type="function">
    <text evidence="1 2">Responsible for the hydrolysis of cyanuric acid, an intermediate formed during catabolism of s-triazine based compounds in herbicides such as atrazine and polymers such as melamine. Catalyzes the hydrolytic opening of the s-triazine ring of cyanuric acid (2,4,6-trihydroxy-s-triazine) to yield carbon dioxide and carboxybiuret, which spontaneously decarboxylates to biuret (By similarity). Required for growth on melamine or cyanuric acid as sole nitrogen source (PubMed:22210223).</text>
</comment>
<comment type="catalytic activity">
    <reaction evidence="1">
        <text>cyanurate + H2O = 1-carboxybiuret + H(+)</text>
        <dbReference type="Rhea" id="RHEA:70363"/>
        <dbReference type="ChEBI" id="CHEBI:15377"/>
        <dbReference type="ChEBI" id="CHEBI:15378"/>
        <dbReference type="ChEBI" id="CHEBI:38028"/>
        <dbReference type="ChEBI" id="CHEBI:142864"/>
        <dbReference type="EC" id="3.5.2.15"/>
    </reaction>
</comment>
<comment type="activity regulation">
    <text evidence="1">Inhibited by barbituric acid.</text>
</comment>
<comment type="pathway">
    <text evidence="1">Xenobiotic degradation; atrazine degradation; biuret from cyanurate: step 1/1.</text>
</comment>
<comment type="subunit">
    <text evidence="1">Homotetramer.</text>
</comment>
<comment type="domain">
    <text evidence="1">The monomer structure is formed from three repeating units (RUs) that share the same structure as one another. The monomer, the active site and substrate all possess threefold rotational symmetry, to the extent that the active site possesses three potential Ser-Lys catalytic dyads. It is possible that any or all of the three active-site serines may act as nucleophile (albeit only one can do so per catalytic cycle).</text>
</comment>
<comment type="similarity">
    <text evidence="1 3">Belongs to the cyclic amide hydrolase (CyAH) family.</text>
</comment>
<keyword id="KW-0378">Hydrolase</keyword>
<keyword id="KW-0460">Magnesium</keyword>
<keyword id="KW-0479">Metal-binding</keyword>
<keyword id="KW-0614">Plasmid</keyword>
<sequence>MSSTALYTVPTAGPDDVAALKALDGHSASDILAVIGKTEGNGCVNDFSRTLSAAVWHPLLEDSAITVFSGGAEGVISPHVNIFVRDERQYSGHPRGLVTAVGRTRVIGPEEIGRPAQVDAVHETVVALLTELGVGPDDVHLVLIKCPLLSSDAIAGVHRRGLRPVTTDTYESMSRSRAASALGIAMALKECDRDRALLALEGRDDVWSARASASSGAELDDCHILVVAESDAAANPLRAAHTAMRDALDIQALTEVFDRIAAEGGTVRQIFAKAEADPSGAIRGYRHTMLTDSDVNATRHARAAVGGLIAALHGNGAVYVSGGAEHQGPSGGGSVTVIYDVPATANATGEASR</sequence>
<feature type="chain" id="PRO_0000439920" description="Cyanuric acid amidohydrolase">
    <location>
        <begin position="1"/>
        <end position="353"/>
    </location>
</feature>
<feature type="region of interest" description="RU A" evidence="1">
    <location>
        <begin position="1"/>
        <end position="90"/>
    </location>
</feature>
<feature type="region of interest" description="RU B" evidence="1">
    <location>
        <begin position="96"/>
        <end position="231"/>
    </location>
</feature>
<feature type="region of interest" description="RU C" evidence="1">
    <location>
        <begin position="237"/>
        <end position="353"/>
    </location>
</feature>
<feature type="active site" evidence="1">
    <location>
        <position position="145"/>
    </location>
</feature>
<feature type="active site" description="Nucleophile" evidence="1">
    <location>
        <position position="214"/>
    </location>
</feature>
<feature type="binding site" evidence="1">
    <location>
        <position position="49"/>
    </location>
    <ligand>
        <name>substrate</name>
    </ligand>
</feature>
<feature type="binding site" evidence="1">
    <location>
        <begin position="69"/>
        <end position="70"/>
    </location>
    <ligand>
        <name>substrate</name>
    </ligand>
</feature>
<feature type="binding site" evidence="1">
    <location>
        <position position="177"/>
    </location>
    <ligand>
        <name>substrate</name>
    </ligand>
</feature>
<feature type="binding site" evidence="1">
    <location>
        <begin position="214"/>
        <end position="215"/>
    </location>
    <ligand>
        <name>substrate</name>
    </ligand>
</feature>
<feature type="binding site" evidence="1">
    <location>
        <position position="275"/>
    </location>
    <ligand>
        <name>Mg(2+)</name>
        <dbReference type="ChEBI" id="CHEBI:18420"/>
        <note>structural</note>
    </ligand>
</feature>
<feature type="binding site" evidence="1">
    <location>
        <position position="302"/>
    </location>
    <ligand>
        <name>substrate</name>
    </ligand>
</feature>
<feature type="binding site" evidence="1">
    <location>
        <begin position="321"/>
        <end position="322"/>
    </location>
    <ligand>
        <name>substrate</name>
    </ligand>
</feature>
<feature type="binding site" evidence="1">
    <location>
        <position position="324"/>
    </location>
    <ligand>
        <name>Mg(2+)</name>
        <dbReference type="ChEBI" id="CHEBI:18420"/>
        <note>structural</note>
    </ligand>
</feature>
<feature type="binding site" evidence="1">
    <location>
        <position position="327"/>
    </location>
    <ligand>
        <name>Mg(2+)</name>
        <dbReference type="ChEBI" id="CHEBI:18420"/>
        <note>structural</note>
    </ligand>
</feature>
<feature type="binding site" evidence="1">
    <location>
        <position position="328"/>
    </location>
    <ligand>
        <name>Mg(2+)</name>
        <dbReference type="ChEBI" id="CHEBI:18420"/>
        <note>structural</note>
    </ligand>
</feature>
<feature type="binding site" evidence="1">
    <location>
        <position position="329"/>
    </location>
    <ligand>
        <name>Mg(2+)</name>
        <dbReference type="ChEBI" id="CHEBI:18420"/>
        <note>structural</note>
    </ligand>
</feature>
<feature type="binding site" evidence="1">
    <location>
        <position position="332"/>
    </location>
    <ligand>
        <name>Mg(2+)</name>
        <dbReference type="ChEBI" id="CHEBI:18420"/>
        <note>structural</note>
    </ligand>
</feature>
<feature type="site" description="Important for substrate specificity" evidence="1">
    <location>
        <position position="298"/>
    </location>
</feature>
<reference key="1">
    <citation type="journal article" date="2012" name="Appl. Environ. Microbiol.">
        <title>Plasmid localization and organization of melamine degradation genes in Rhodococcus sp. strain Mel.</title>
        <authorList>
            <person name="Dodge A.G."/>
            <person name="Wackett L.P."/>
            <person name="Sadowsky M.J."/>
        </authorList>
    </citation>
    <scope>NUCLEOTIDE SEQUENCE [GENOMIC DNA]</scope>
    <scope>FUNCTION</scope>
    <source>
        <strain>Mel</strain>
    </source>
</reference>
<organism>
    <name type="scientific">Rhodococcus sp</name>
    <dbReference type="NCBI Taxonomy" id="1831"/>
    <lineage>
        <taxon>Bacteria</taxon>
        <taxon>Bacillati</taxon>
        <taxon>Actinomycetota</taxon>
        <taxon>Actinomycetes</taxon>
        <taxon>Mycobacteriales</taxon>
        <taxon>Nocardiaceae</taxon>
        <taxon>Rhodococcus</taxon>
    </lineage>
</organism>
<proteinExistence type="inferred from homology"/>
<geneLocation type="plasmid">
    <name>pMel2</name>
</geneLocation>
<dbReference type="EC" id="3.5.2.15" evidence="1"/>
<dbReference type="EMBL" id="JN241637">
    <property type="protein sequence ID" value="AEX65082.1"/>
    <property type="molecule type" value="Genomic_DNA"/>
</dbReference>
<dbReference type="SMR" id="H8ZKW0"/>
<dbReference type="UniPathway" id="UPA00008">
    <property type="reaction ID" value="UER00502"/>
</dbReference>
<dbReference type="GO" id="GO:0018753">
    <property type="term" value="F:cyanuric acid amidohydrolase activity"/>
    <property type="evidence" value="ECO:0007669"/>
    <property type="project" value="UniProtKB-UniRule"/>
</dbReference>
<dbReference type="GO" id="GO:0046872">
    <property type="term" value="F:metal ion binding"/>
    <property type="evidence" value="ECO:0007669"/>
    <property type="project" value="UniProtKB-UniRule"/>
</dbReference>
<dbReference type="GO" id="GO:0019381">
    <property type="term" value="P:atrazine catabolic process"/>
    <property type="evidence" value="ECO:0007669"/>
    <property type="project" value="UniProtKB-UniRule"/>
</dbReference>
<dbReference type="Gene3D" id="3.30.1330.160">
    <property type="entry name" value="Cyanuric acid hydrolase/Barbituras, RU C"/>
    <property type="match status" value="1"/>
</dbReference>
<dbReference type="Gene3D" id="3.30.1330.170">
    <property type="entry name" value="Cyanuric acid hydrolase/Barbiturase, RU A"/>
    <property type="match status" value="1"/>
</dbReference>
<dbReference type="Gene3D" id="3.30.1330.180">
    <property type="entry name" value="Cyanuric acid hydrolase/Barbiturase, RU B"/>
    <property type="match status" value="1"/>
</dbReference>
<dbReference type="HAMAP" id="MF_01989">
    <property type="entry name" value="Cyc_amidohydrol"/>
    <property type="match status" value="1"/>
</dbReference>
<dbReference type="InterPro" id="IPR014086">
    <property type="entry name" value="AtzD/Barbiturase"/>
</dbReference>
<dbReference type="InterPro" id="IPR043008">
    <property type="entry name" value="AtzD/Barbiturase_RUA"/>
</dbReference>
<dbReference type="InterPro" id="IPR043006">
    <property type="entry name" value="AtzD/Barbiturase_RUB"/>
</dbReference>
<dbReference type="InterPro" id="IPR043007">
    <property type="entry name" value="AtzD/Barbiturase_RUC"/>
</dbReference>
<dbReference type="NCBIfam" id="TIGR02714">
    <property type="entry name" value="amido_AtzD_TrzD"/>
    <property type="match status" value="1"/>
</dbReference>
<dbReference type="Pfam" id="PF09663">
    <property type="entry name" value="Amido_AtzD_TrzD"/>
    <property type="match status" value="1"/>
</dbReference>
<name>CAH_RHOSO</name>